<organism evidence="14">
    <name type="scientific">Drosophila melanogaster</name>
    <name type="common">Fruit fly</name>
    <dbReference type="NCBI Taxonomy" id="7227"/>
    <lineage>
        <taxon>Eukaryota</taxon>
        <taxon>Metazoa</taxon>
        <taxon>Ecdysozoa</taxon>
        <taxon>Arthropoda</taxon>
        <taxon>Hexapoda</taxon>
        <taxon>Insecta</taxon>
        <taxon>Pterygota</taxon>
        <taxon>Neoptera</taxon>
        <taxon>Endopterygota</taxon>
        <taxon>Diptera</taxon>
        <taxon>Brachycera</taxon>
        <taxon>Muscomorpha</taxon>
        <taxon>Ephydroidea</taxon>
        <taxon>Drosophilidae</taxon>
        <taxon>Drosophila</taxon>
        <taxon>Sophophora</taxon>
    </lineage>
</organism>
<accession>Q9GPJ1</accession>
<accession>Q8T0R5</accession>
<reference evidence="13" key="1">
    <citation type="journal article" date="2000" name="J. Cell Biol.">
        <title>Skeletor, a novel chromosomal protein that redistributes during mitosis provides evidence for the formation of a spindle matrix.</title>
        <authorList>
            <person name="Walker D.L."/>
            <person name="Wang D."/>
            <person name="Jin Y."/>
            <person name="Rath U."/>
            <person name="Wang Y."/>
            <person name="Johansen J."/>
            <person name="Johansen K.M."/>
        </authorList>
    </citation>
    <scope>NUCLEOTIDE SEQUENCE [MRNA] (ISOFORM D)</scope>
    <scope>FUNCTION</scope>
    <scope>SUBCELLULAR LOCATION</scope>
    <scope>DEVELOPMENTAL STAGE</scope>
    <source>
        <strain evidence="6">Canton-S</strain>
        <tissue evidence="6">Embryo</tissue>
    </source>
</reference>
<reference evidence="13" key="2">
    <citation type="journal article" date="2000" name="Science">
        <title>The genome sequence of Drosophila melanogaster.</title>
        <authorList>
            <person name="Adams M.D."/>
            <person name="Celniker S.E."/>
            <person name="Holt R.A."/>
            <person name="Evans C.A."/>
            <person name="Gocayne J.D."/>
            <person name="Amanatides P.G."/>
            <person name="Scherer S.E."/>
            <person name="Li P.W."/>
            <person name="Hoskins R.A."/>
            <person name="Galle R.F."/>
            <person name="George R.A."/>
            <person name="Lewis S.E."/>
            <person name="Richards S."/>
            <person name="Ashburner M."/>
            <person name="Henderson S.N."/>
            <person name="Sutton G.G."/>
            <person name="Wortman J.R."/>
            <person name="Yandell M.D."/>
            <person name="Zhang Q."/>
            <person name="Chen L.X."/>
            <person name="Brandon R.C."/>
            <person name="Rogers Y.-H.C."/>
            <person name="Blazej R.G."/>
            <person name="Champe M."/>
            <person name="Pfeiffer B.D."/>
            <person name="Wan K.H."/>
            <person name="Doyle C."/>
            <person name="Baxter E.G."/>
            <person name="Helt G."/>
            <person name="Nelson C.R."/>
            <person name="Miklos G.L.G."/>
            <person name="Abril J.F."/>
            <person name="Agbayani A."/>
            <person name="An H.-J."/>
            <person name="Andrews-Pfannkoch C."/>
            <person name="Baldwin D."/>
            <person name="Ballew R.M."/>
            <person name="Basu A."/>
            <person name="Baxendale J."/>
            <person name="Bayraktaroglu L."/>
            <person name="Beasley E.M."/>
            <person name="Beeson K.Y."/>
            <person name="Benos P.V."/>
            <person name="Berman B.P."/>
            <person name="Bhandari D."/>
            <person name="Bolshakov S."/>
            <person name="Borkova D."/>
            <person name="Botchan M.R."/>
            <person name="Bouck J."/>
            <person name="Brokstein P."/>
            <person name="Brottier P."/>
            <person name="Burtis K.C."/>
            <person name="Busam D.A."/>
            <person name="Butler H."/>
            <person name="Cadieu E."/>
            <person name="Center A."/>
            <person name="Chandra I."/>
            <person name="Cherry J.M."/>
            <person name="Cawley S."/>
            <person name="Dahlke C."/>
            <person name="Davenport L.B."/>
            <person name="Davies P."/>
            <person name="de Pablos B."/>
            <person name="Delcher A."/>
            <person name="Deng Z."/>
            <person name="Mays A.D."/>
            <person name="Dew I."/>
            <person name="Dietz S.M."/>
            <person name="Dodson K."/>
            <person name="Doup L.E."/>
            <person name="Downes M."/>
            <person name="Dugan-Rocha S."/>
            <person name="Dunkov B.C."/>
            <person name="Dunn P."/>
            <person name="Durbin K.J."/>
            <person name="Evangelista C.C."/>
            <person name="Ferraz C."/>
            <person name="Ferriera S."/>
            <person name="Fleischmann W."/>
            <person name="Fosler C."/>
            <person name="Gabrielian A.E."/>
            <person name="Garg N.S."/>
            <person name="Gelbart W.M."/>
            <person name="Glasser K."/>
            <person name="Glodek A."/>
            <person name="Gong F."/>
            <person name="Gorrell J.H."/>
            <person name="Gu Z."/>
            <person name="Guan P."/>
            <person name="Harris M."/>
            <person name="Harris N.L."/>
            <person name="Harvey D.A."/>
            <person name="Heiman T.J."/>
            <person name="Hernandez J.R."/>
            <person name="Houck J."/>
            <person name="Hostin D."/>
            <person name="Houston K.A."/>
            <person name="Howland T.J."/>
            <person name="Wei M.-H."/>
            <person name="Ibegwam C."/>
            <person name="Jalali M."/>
            <person name="Kalush F."/>
            <person name="Karpen G.H."/>
            <person name="Ke Z."/>
            <person name="Kennison J.A."/>
            <person name="Ketchum K.A."/>
            <person name="Kimmel B.E."/>
            <person name="Kodira C.D."/>
            <person name="Kraft C.L."/>
            <person name="Kravitz S."/>
            <person name="Kulp D."/>
            <person name="Lai Z."/>
            <person name="Lasko P."/>
            <person name="Lei Y."/>
            <person name="Levitsky A.A."/>
            <person name="Li J.H."/>
            <person name="Li Z."/>
            <person name="Liang Y."/>
            <person name="Lin X."/>
            <person name="Liu X."/>
            <person name="Mattei B."/>
            <person name="McIntosh T.C."/>
            <person name="McLeod M.P."/>
            <person name="McPherson D."/>
            <person name="Merkulov G."/>
            <person name="Milshina N.V."/>
            <person name="Mobarry C."/>
            <person name="Morris J."/>
            <person name="Moshrefi A."/>
            <person name="Mount S.M."/>
            <person name="Moy M."/>
            <person name="Murphy B."/>
            <person name="Murphy L."/>
            <person name="Muzny D.M."/>
            <person name="Nelson D.L."/>
            <person name="Nelson D.R."/>
            <person name="Nelson K.A."/>
            <person name="Nixon K."/>
            <person name="Nusskern D.R."/>
            <person name="Pacleb J.M."/>
            <person name="Palazzolo M."/>
            <person name="Pittman G.S."/>
            <person name="Pan S."/>
            <person name="Pollard J."/>
            <person name="Puri V."/>
            <person name="Reese M.G."/>
            <person name="Reinert K."/>
            <person name="Remington K."/>
            <person name="Saunders R.D.C."/>
            <person name="Scheeler F."/>
            <person name="Shen H."/>
            <person name="Shue B.C."/>
            <person name="Siden-Kiamos I."/>
            <person name="Simpson M."/>
            <person name="Skupski M.P."/>
            <person name="Smith T.J."/>
            <person name="Spier E."/>
            <person name="Spradling A.C."/>
            <person name="Stapleton M."/>
            <person name="Strong R."/>
            <person name="Sun E."/>
            <person name="Svirskas R."/>
            <person name="Tector C."/>
            <person name="Turner R."/>
            <person name="Venter E."/>
            <person name="Wang A.H."/>
            <person name="Wang X."/>
            <person name="Wang Z.-Y."/>
            <person name="Wassarman D.A."/>
            <person name="Weinstock G.M."/>
            <person name="Weissenbach J."/>
            <person name="Williams S.M."/>
            <person name="Woodage T."/>
            <person name="Worley K.C."/>
            <person name="Wu D."/>
            <person name="Yang S."/>
            <person name="Yao Q.A."/>
            <person name="Ye J."/>
            <person name="Yeh R.-F."/>
            <person name="Zaveri J.S."/>
            <person name="Zhan M."/>
            <person name="Zhang G."/>
            <person name="Zhao Q."/>
            <person name="Zheng L."/>
            <person name="Zheng X.H."/>
            <person name="Zhong F.N."/>
            <person name="Zhong W."/>
            <person name="Zhou X."/>
            <person name="Zhu S.C."/>
            <person name="Zhu X."/>
            <person name="Smith H.O."/>
            <person name="Gibbs R.A."/>
            <person name="Myers E.W."/>
            <person name="Rubin G.M."/>
            <person name="Venter J.C."/>
        </authorList>
    </citation>
    <scope>NUCLEOTIDE SEQUENCE [LARGE SCALE GENOMIC DNA]</scope>
    <source>
        <strain evidence="5">Berkeley</strain>
    </source>
</reference>
<reference evidence="13" key="3">
    <citation type="journal article" date="2002" name="Genome Biol.">
        <title>Annotation of the Drosophila melanogaster euchromatic genome: a systematic review.</title>
        <authorList>
            <person name="Misra S."/>
            <person name="Crosby M.A."/>
            <person name="Mungall C.J."/>
            <person name="Matthews B.B."/>
            <person name="Campbell K.S."/>
            <person name="Hradecky P."/>
            <person name="Huang Y."/>
            <person name="Kaminker J.S."/>
            <person name="Millburn G.H."/>
            <person name="Prochnik S.E."/>
            <person name="Smith C.D."/>
            <person name="Tupy J.L."/>
            <person name="Whitfield E.J."/>
            <person name="Bayraktaroglu L."/>
            <person name="Berman B.P."/>
            <person name="Bettencourt B.R."/>
            <person name="Celniker S.E."/>
            <person name="de Grey A.D.N.J."/>
            <person name="Drysdale R.A."/>
            <person name="Harris N.L."/>
            <person name="Richter J."/>
            <person name="Russo S."/>
            <person name="Schroeder A.J."/>
            <person name="Shu S.Q."/>
            <person name="Stapleton M."/>
            <person name="Yamada C."/>
            <person name="Ashburner M."/>
            <person name="Gelbart W.M."/>
            <person name="Rubin G.M."/>
            <person name="Lewis S.E."/>
        </authorList>
    </citation>
    <scope>GENOME REANNOTATION</scope>
    <scope>ALTERNATIVE SPLICING</scope>
    <source>
        <strain>Berkeley</strain>
    </source>
</reference>
<reference evidence="13" key="4">
    <citation type="journal article" date="2002" name="Genome Biol.">
        <title>A Drosophila full-length cDNA resource.</title>
        <authorList>
            <person name="Stapleton M."/>
            <person name="Carlson J.W."/>
            <person name="Brokstein P."/>
            <person name="Yu C."/>
            <person name="Champe M."/>
            <person name="George R.A."/>
            <person name="Guarin H."/>
            <person name="Kronmiller B."/>
            <person name="Pacleb J.M."/>
            <person name="Park S."/>
            <person name="Wan K.H."/>
            <person name="Rubin G.M."/>
            <person name="Celniker S.E."/>
        </authorList>
    </citation>
    <scope>NUCLEOTIDE SEQUENCE [LARGE SCALE MRNA] (ISOFORM D)</scope>
    <source>
        <strain evidence="7">Berkeley</strain>
        <tissue evidence="7">Head</tissue>
    </source>
</reference>
<reference key="5">
    <citation type="journal article" date="2004" name="J. Cell Sci.">
        <title>Novel nuclear defects in KLP61F-deficient mutants in Drosophila are partially suppressed by loss of Ncd function.</title>
        <authorList>
            <person name="Wilson P.G."/>
            <person name="Simmons R."/>
            <person name="Saighal S."/>
        </authorList>
    </citation>
    <scope>FUNCTION</scope>
    <scope>SUBCELLULAR LOCATION</scope>
</reference>
<reference key="6">
    <citation type="journal article" date="2004" name="J. Cell. Biochem.">
        <title>Chromator, a novel and essential chromodomain protein interacts directly with the putative spindle matrix protein skeletor.</title>
        <authorList>
            <person name="Rath U."/>
            <person name="Wang D."/>
            <person name="Ding Y."/>
            <person name="Xu Y.Z."/>
            <person name="Qi H."/>
            <person name="Blacketer M.J."/>
            <person name="Girton J."/>
            <person name="Johansen J."/>
            <person name="Johansen K.M."/>
        </authorList>
    </citation>
    <scope>INTERACTION WITH CHRO</scope>
    <scope>SUBCELLULAR LOCATION</scope>
</reference>
<reference key="7">
    <citation type="journal article" date="2004" name="Mol. Biol. Cell">
        <title>Megator, an essential coiled-coil protein that localizes to the putative spindle matrix during mitosis in Drosophila.</title>
        <authorList>
            <person name="Qi H."/>
            <person name="Rath U."/>
            <person name="Wang D."/>
            <person name="Xu Y.Z."/>
            <person name="Ding Y."/>
            <person name="Zhang W."/>
            <person name="Blacketer M.J."/>
            <person name="Paddy M.R."/>
            <person name="Girton J."/>
            <person name="Johansen J."/>
            <person name="Johansen K.M."/>
        </authorList>
    </citation>
    <scope>INTERACTION WITH MGTOR</scope>
    <scope>SUBCELLULAR LOCATION</scope>
</reference>
<feature type="signal peptide" evidence="1">
    <location>
        <begin position="1"/>
        <end position="28"/>
    </location>
</feature>
<feature type="chain" id="PRO_0000097778" description="Protein Skeletor, isoforms D/E">
    <location>
        <begin position="29"/>
        <end position="1503"/>
    </location>
</feature>
<feature type="domain" description="DM13 1" evidence="3">
    <location>
        <begin position="34"/>
        <end position="143"/>
    </location>
</feature>
<feature type="domain" description="DM13 2" evidence="3">
    <location>
        <begin position="151"/>
        <end position="258"/>
    </location>
</feature>
<feature type="domain" description="DOMON" evidence="2">
    <location>
        <begin position="287"/>
        <end position="419"/>
    </location>
</feature>
<feature type="region of interest" description="Disordered" evidence="4">
    <location>
        <begin position="451"/>
        <end position="491"/>
    </location>
</feature>
<feature type="region of interest" description="Disordered" evidence="4">
    <location>
        <begin position="830"/>
        <end position="857"/>
    </location>
</feature>
<feature type="region of interest" description="Disordered" evidence="4">
    <location>
        <begin position="1086"/>
        <end position="1106"/>
    </location>
</feature>
<feature type="region of interest" description="Disordered" evidence="4">
    <location>
        <begin position="1426"/>
        <end position="1503"/>
    </location>
</feature>
<feature type="compositionally biased region" description="Low complexity" evidence="4">
    <location>
        <begin position="830"/>
        <end position="840"/>
    </location>
</feature>
<feature type="compositionally biased region" description="Low complexity" evidence="4">
    <location>
        <begin position="1452"/>
        <end position="1491"/>
    </location>
</feature>
<feature type="splice variant" id="VSP_041898" description="In isoform D." evidence="11 12">
    <location>
        <begin position="1"/>
        <end position="791"/>
    </location>
</feature>
<proteinExistence type="evidence at protein level"/>
<sequence>MLAMKDKPWLLLFGLLAALSCLASFGDAAYPYYGTKIGALTRLHHGVSGDVYAVDSRTIFIKKFNYDGEAPAAYFYVGNTARPSNEGAARLRDERGGTASLTRRYRNKDVTLSLPEGKTLRDIKWFSVWCDEFAVNFGDVSIPPNLDFPRPQKISALRGVHGVSSDNIVIVDAQTLLVPNFSYDGEAPDAKFWVGRGQRPTSDGLRIPDENGKENPLRRYERKTIVLTLPEDLTIFDIGHFGVWCEAFTVDFGHVRLPEGLNVPPSLKMLGISPQSKLNCEVLYDDLAFEVRWAVAGESIVVQLVAKLEPNHYMSFGISPNKNISQMIGADAVVAWVDPQTGNGFATDYFLEGKAQCSGGRGACPDTKISEKTNSIRLLNAAMVNGYSIVTYQRSLAATDRLDLPISITGAESVVWAIGPLNDYQEVSFHTFYNKHLHQIEFGRQPKWNCPLPEGARGNSNSSEQEDSAPAAQSSTGGAGYPPAGRPNVEPDEEFYENRAEALHRQPPQRRQETAIITQRRPVPTPKPVNSNGAWDIPAIQCHEPEDGVFYAQMGPTGGKHGYPAITGHVGWGISWYINGLLIPEIHVVRGKTYTFVVEGGNNPDIPAKYHPFYISDDPVGGYEHKREEEKKAVRIYAGVHRSRSGQVTPTGVGRLCNWTPDVEGPPADDYQSFGAYQRTLTLKCDAGEPGVITWKPDRNTPDTVYYHCFTHRYLGWKIHVHDSCDSEAGGLKGAASERHEIRLPAKATVAEPAPVHEDYAGEASVRHETKVSANDNFLLKHQTDLIKNHNMNGTPPKLSFEITKSSEITKLISDGIRAAEALEESLLRNPNLNPNHPNQNPIPNPHQKPNVTPTEISSRPEILLGETHAHTLNASPSASAYPSPSATLPSANLKLPILAAGPHLIHHPPHLHRLHHQPQHAPHPHVHLHHHNLTANLPALAQKTIGLSEFLRPPQNAPLFHPVKLPGRRPFPAPIKKVPASRPILPQQHPHLHPHPQQHPVLLQQQPSLIVSHYRKPIPGLLKPFVKEKPFPLQPLAASVLLLGQPTELGGLNNKGERLKIKGKPKIPVPYVDLEPQGSLQNTAIFNQPGGKGKGDQKPKASSVSISTTPIPLVKRPTVKEPSQEEIASMRPAVNQGFKPDTVIVESGFKPIVRTDGTGVQLPKEIIDQVAHRREDPGTEIDEVMETDTLFLAAQQGGSETQSFEPMFIPSPLDSTNATKVLRVNVKEVSPTASALRLPSAALEHALPSASELIKPTLDELFAEDLNEEELEMEPMPVADDVESLEETTKKDAVTTTINIPRNTTKKPDPDLLEDLFGPDEEELYADELELDMDDRVAAAAERIDTYYLPPDNRKIPDTRVPSGALYTFDGKSVVDSSLVLPPKLDAPDNANVHQRHAQYGLTPLEQLVRTTPQFGVYRGELPQEFRGTEPQPVSEYSHPAPFSRTTPVFSSSSGSTIYPYSSSTGASTSTVSSSASSPLSSSSLRPISTKLQLLKPEGRRA</sequence>
<comment type="function">
    <text evidence="6 9">Provides structural support to stabilize and organize the microtubule spindle during mitosis (within embryonic somatic cells) and meiosis (within spermatocytes). The role in mitosis regulation depends on the Ran pathway.</text>
</comment>
<comment type="subunit">
    <text evidence="8 10">Interacts with Chro and Mgtor as part of a macromolecular complex forming the spindle matrix. Chro colocalizes with Skeletor (Skel) on the chromosomes at interphase and on spindle during metaphase.</text>
</comment>
<comment type="subcellular location">
    <subcellularLocation>
        <location>Cytoplasm</location>
        <location>Cytoskeleton</location>
        <location>Spindle</location>
    </subcellularLocation>
    <subcellularLocation>
        <location>Nucleus</location>
        <location>Nucleolus</location>
    </subcellularLocation>
    <subcellularLocation>
        <location>Chromosome</location>
    </subcellularLocation>
    <text>Part of a macromolecular complex forming the spindle matrix. During mitosis, associated with chromatin at interphase, redistributes to the spindle structure at prophase (preceding the formation of the microtubule spindle) through to anaphase. Extends from one end of the spindle to the other during metaphase and anaphase, coaligns with the microtubule spindle.</text>
</comment>
<comment type="alternative products">
    <event type="alternative splicing"/>
    <isoform>
        <id>Q9GPJ1-1</id>
        <name>E</name>
        <sequence type="displayed"/>
    </isoform>
    <isoform>
        <id>Q9GPJ1-2</id>
        <name>D</name>
        <name>ORF2</name>
        <sequence type="described" ref="VSP_041898"/>
    </isoform>
    <isoform>
        <id>Q9VGY6-2</id>
        <name>B</name>
        <name>ORF1a</name>
        <sequence type="external"/>
    </isoform>
    <isoform>
        <id>Q9VGY6-1</id>
        <name>C</name>
        <name>ORF1b</name>
        <sequence type="external"/>
    </isoform>
</comment>
<comment type="developmental stage">
    <text evidence="6">Isoform D is expressed during embryonic development.</text>
</comment>
<comment type="sequence caution" evidence="13">
    <conflict type="miscellaneous discrepancy">
        <sequence resource="EMBL-CDS" id="AAG46059"/>
    </conflict>
    <text>Intron retention.</text>
</comment>
<comment type="sequence caution" evidence="13">
    <conflict type="miscellaneous discrepancy">
        <sequence resource="EMBL-CDS" id="AAL39254"/>
    </conflict>
    <text>Intron retention.</text>
</comment>
<comment type="sequence caution" evidence="13">
    <conflict type="erroneous gene model prediction">
        <sequence resource="EMBL-CDS" id="AAO41539"/>
    </conflict>
</comment>
<name>SKEL2_DROME</name>
<protein>
    <recommendedName>
        <fullName evidence="11">Protein Skeletor, isoforms D/E</fullName>
    </recommendedName>
</protein>
<gene>
    <name evidence="15" type="primary">Skel</name>
    <name evidence="15" type="ORF">CG43161</name>
</gene>
<evidence type="ECO:0000255" key="1"/>
<evidence type="ECO:0000255" key="2">
    <source>
        <dbReference type="PROSITE-ProRule" id="PRU00246"/>
    </source>
</evidence>
<evidence type="ECO:0000255" key="3">
    <source>
        <dbReference type="PROSITE-ProRule" id="PRU00882"/>
    </source>
</evidence>
<evidence type="ECO:0000256" key="4">
    <source>
        <dbReference type="SAM" id="MobiDB-lite"/>
    </source>
</evidence>
<evidence type="ECO:0000269" key="5">
    <source>
    </source>
</evidence>
<evidence type="ECO:0000269" key="6">
    <source>
    </source>
</evidence>
<evidence type="ECO:0000269" key="7">
    <source>
    </source>
</evidence>
<evidence type="ECO:0000269" key="8">
    <source>
    </source>
</evidence>
<evidence type="ECO:0000269" key="9">
    <source>
    </source>
</evidence>
<evidence type="ECO:0000269" key="10">
    <source>
    </source>
</evidence>
<evidence type="ECO:0000303" key="11">
    <source>
    </source>
</evidence>
<evidence type="ECO:0000303" key="12">
    <source>
    </source>
</evidence>
<evidence type="ECO:0000305" key="13"/>
<evidence type="ECO:0000312" key="14">
    <source>
        <dbReference type="EMBL" id="AAG46059.1"/>
    </source>
</evidence>
<evidence type="ECO:0000312" key="15">
    <source>
        <dbReference type="FlyBase" id="FBgn0262717"/>
    </source>
</evidence>
<keyword id="KW-0025">Alternative splicing</keyword>
<keyword id="KW-0131">Cell cycle</keyword>
<keyword id="KW-0132">Cell division</keyword>
<keyword id="KW-0158">Chromosome</keyword>
<keyword id="KW-0963">Cytoplasm</keyword>
<keyword id="KW-0206">Cytoskeleton</keyword>
<keyword id="KW-0469">Meiosis</keyword>
<keyword id="KW-0493">Microtubule</keyword>
<keyword id="KW-0498">Mitosis</keyword>
<keyword id="KW-0539">Nucleus</keyword>
<keyword id="KW-1185">Reference proteome</keyword>
<keyword id="KW-0677">Repeat</keyword>
<keyword id="KW-0732">Signal</keyword>
<dbReference type="EMBL" id="AF321289">
    <property type="protein sequence ID" value="AAG46059.1"/>
    <property type="status" value="ALT_SEQ"/>
    <property type="molecule type" value="mRNA"/>
</dbReference>
<dbReference type="EMBL" id="AE014297">
    <property type="protein sequence ID" value="AAO41539.1"/>
    <property type="status" value="ALT_SEQ"/>
    <property type="molecule type" value="Genomic_DNA"/>
</dbReference>
<dbReference type="EMBL" id="AY069109">
    <property type="protein sequence ID" value="AAL39254.1"/>
    <property type="status" value="ALT_SEQ"/>
    <property type="molecule type" value="mRNA"/>
</dbReference>
<dbReference type="RefSeq" id="NP_001027173.2">
    <molecule id="Q9GPJ1-2"/>
    <property type="nucleotide sequence ID" value="NM_001032002.2"/>
</dbReference>
<dbReference type="RefSeq" id="NP_001247027.1">
    <molecule id="Q9GPJ1-1"/>
    <property type="nucleotide sequence ID" value="NM_001260098.1"/>
</dbReference>
<dbReference type="SMR" id="Q9GPJ1"/>
<dbReference type="BioGRID" id="534156">
    <property type="interactions" value="1"/>
</dbReference>
<dbReference type="FunCoup" id="Q9GPJ1">
    <property type="interactions" value="56"/>
</dbReference>
<dbReference type="STRING" id="7227.FBpp0296946"/>
<dbReference type="GlyGen" id="Q9GPJ1">
    <property type="glycosylation" value="1 site"/>
</dbReference>
<dbReference type="PaxDb" id="7227-FBpp0296946"/>
<dbReference type="DNASU" id="3772559"/>
<dbReference type="EnsemblMetazoa" id="FBtr0305665">
    <molecule id="Q9GPJ1-2"/>
    <property type="protein sequence ID" value="FBpp0296945"/>
    <property type="gene ID" value="FBgn0262717"/>
</dbReference>
<dbReference type="EnsemblMetazoa" id="FBtr0305666">
    <molecule id="Q9GPJ1-1"/>
    <property type="protein sequence ID" value="FBpp0296946"/>
    <property type="gene ID" value="FBgn0262717"/>
</dbReference>
<dbReference type="GeneID" id="3772559"/>
<dbReference type="UCSC" id="CG33676-RA">
    <molecule id="Q9GPJ1-1"/>
    <property type="organism name" value="d. melanogaster"/>
</dbReference>
<dbReference type="AGR" id="FB:FBgn0262717"/>
<dbReference type="CTD" id="3772559"/>
<dbReference type="FlyBase" id="FBgn0262717">
    <property type="gene designation" value="Skel"/>
</dbReference>
<dbReference type="VEuPathDB" id="VectorBase:FBgn0262717"/>
<dbReference type="eggNOG" id="KOG4731">
    <property type="taxonomic scope" value="Eukaryota"/>
</dbReference>
<dbReference type="HOGENOM" id="CLU_004063_0_0_1"/>
<dbReference type="InParanoid" id="Q9GPJ1"/>
<dbReference type="OMA" id="HETQVSP"/>
<dbReference type="OrthoDB" id="2448405at2759"/>
<dbReference type="PhylomeDB" id="Q9GPJ1"/>
<dbReference type="BioGRID-ORCS" id="3772559">
    <property type="hits" value="0 hits in 1 CRISPR screen"/>
</dbReference>
<dbReference type="CD-CODE" id="2838EF58">
    <property type="entry name" value="Centrosome"/>
</dbReference>
<dbReference type="GenomeRNAi" id="3772559"/>
<dbReference type="Proteomes" id="UP000000803">
    <property type="component" value="Chromosome 3R"/>
</dbReference>
<dbReference type="Bgee" id="FBgn0262717">
    <property type="expression patterns" value="Expressed in capitellum (Drosophila) and 35 other cell types or tissues"/>
</dbReference>
<dbReference type="ExpressionAtlas" id="Q9GPJ1">
    <property type="expression patterns" value="baseline and differential"/>
</dbReference>
<dbReference type="GO" id="GO:0005737">
    <property type="term" value="C:cytoplasm"/>
    <property type="evidence" value="ECO:0007669"/>
    <property type="project" value="UniProtKB-KW"/>
</dbReference>
<dbReference type="GO" id="GO:0005874">
    <property type="term" value="C:microtubule"/>
    <property type="evidence" value="ECO:0007669"/>
    <property type="project" value="UniProtKB-KW"/>
</dbReference>
<dbReference type="GO" id="GO:0005730">
    <property type="term" value="C:nucleolus"/>
    <property type="evidence" value="ECO:0007669"/>
    <property type="project" value="UniProtKB-SubCell"/>
</dbReference>
<dbReference type="GO" id="GO:0005634">
    <property type="term" value="C:nucleus"/>
    <property type="evidence" value="ECO:0000314"/>
    <property type="project" value="FlyBase"/>
</dbReference>
<dbReference type="GO" id="GO:0005700">
    <property type="term" value="C:polytene chromosome"/>
    <property type="evidence" value="ECO:0000314"/>
    <property type="project" value="FlyBase"/>
</dbReference>
<dbReference type="GO" id="GO:0005819">
    <property type="term" value="C:spindle"/>
    <property type="evidence" value="ECO:0007669"/>
    <property type="project" value="UniProtKB-SubCell"/>
</dbReference>
<dbReference type="GO" id="GO:0005198">
    <property type="term" value="F:structural molecule activity"/>
    <property type="evidence" value="ECO:0000314"/>
    <property type="project" value="UniProtKB"/>
</dbReference>
<dbReference type="GO" id="GO:0051301">
    <property type="term" value="P:cell division"/>
    <property type="evidence" value="ECO:0007669"/>
    <property type="project" value="UniProtKB-KW"/>
</dbReference>
<dbReference type="GO" id="GO:0051321">
    <property type="term" value="P:meiotic cell cycle"/>
    <property type="evidence" value="ECO:0007669"/>
    <property type="project" value="UniProtKB-KW"/>
</dbReference>
<dbReference type="GO" id="GO:0006997">
    <property type="term" value="P:nucleus organization"/>
    <property type="evidence" value="ECO:0000303"/>
    <property type="project" value="FlyBase"/>
</dbReference>
<dbReference type="GO" id="GO:0051225">
    <property type="term" value="P:spindle assembly"/>
    <property type="evidence" value="ECO:0000314"/>
    <property type="project" value="FlyBase"/>
</dbReference>
<dbReference type="CDD" id="cd09631">
    <property type="entry name" value="DOMON_DOH"/>
    <property type="match status" value="1"/>
</dbReference>
<dbReference type="InterPro" id="IPR019545">
    <property type="entry name" value="DM13_domain"/>
</dbReference>
<dbReference type="InterPro" id="IPR045266">
    <property type="entry name" value="DOH_DOMON"/>
</dbReference>
<dbReference type="InterPro" id="IPR005018">
    <property type="entry name" value="DOMON_domain"/>
</dbReference>
<dbReference type="InterPro" id="IPR052126">
    <property type="entry name" value="Spindle_Org/Thrombomodulin"/>
</dbReference>
<dbReference type="PANTHER" id="PTHR24036:SF13">
    <property type="entry name" value="PROTEIN SKELETOR, ISOFORMS D_E"/>
    <property type="match status" value="1"/>
</dbReference>
<dbReference type="PANTHER" id="PTHR24036">
    <property type="entry name" value="SKELETOR-RELATED"/>
    <property type="match status" value="1"/>
</dbReference>
<dbReference type="Pfam" id="PF25489">
    <property type="entry name" value="At5g54830"/>
    <property type="match status" value="1"/>
</dbReference>
<dbReference type="Pfam" id="PF10517">
    <property type="entry name" value="DM13"/>
    <property type="match status" value="2"/>
</dbReference>
<dbReference type="Pfam" id="PF03351">
    <property type="entry name" value="DOMON"/>
    <property type="match status" value="1"/>
</dbReference>
<dbReference type="SMART" id="SM00686">
    <property type="entry name" value="DM13"/>
    <property type="match status" value="2"/>
</dbReference>
<dbReference type="SMART" id="SM00664">
    <property type="entry name" value="DoH"/>
    <property type="match status" value="1"/>
</dbReference>
<dbReference type="PROSITE" id="PS51549">
    <property type="entry name" value="DM13"/>
    <property type="match status" value="2"/>
</dbReference>
<dbReference type="PROSITE" id="PS50836">
    <property type="entry name" value="DOMON"/>
    <property type="match status" value="1"/>
</dbReference>